<name>SIAT2_ORYLA</name>
<protein>
    <recommendedName>
        <fullName>Beta-galactoside alpha-2,6-sialyltransferase 2</fullName>
        <shortName>Alpha 2,6-ST 2</shortName>
        <ecNumber evidence="2">2.4.3.1</ecNumber>
    </recommendedName>
    <alternativeName>
        <fullName>CMP-N-acetylneuraminate-beta-galactosamide-alpha-2,6-sialyltransferase 2</fullName>
    </alternativeName>
    <alternativeName>
        <fullName>ST6Gal II</fullName>
        <shortName>ST6GalII</shortName>
    </alternativeName>
    <alternativeName>
        <fullName>Sialyltransferase 2</fullName>
    </alternativeName>
</protein>
<gene>
    <name type="primary">st6gal2</name>
</gene>
<accession>Q5K027</accession>
<sequence length="509" mass="57528">MRFSMRQWRKLVLAAILAWALLFLGLLSYFLDNRVEEPLTPAGSLVSQHSDTRRLTSIQSSQQQQQPVPGLRSEQGLNSIRTSHGNQPEAGVLSSSETPGNMVNHIPSSSPYQTYGSQEANHQNDLDPQSLAAWSSFGTQNVDSNFNIASQHRERASQSIFSNNVEDEELPNEISPLVERRADADNVVQHMWRGTVSSGMLSPRLKRAMNDYINANKHHVSYQRHRKVARSAKELLCQMKNQSQLRTVDGSEQPFSSLGWADFVPLVPLQRWNKQRGGRSFRTCAVVSSAGAILHSGLGKEIDSHDAVLRFNAAPTEGYEQDVGTKTTIRIINSQILANPKHEFKTSSIYKNITLVAWDPAPYTLNLDEWFASPDYDLFGPYVEHRKNHAEQLFYILHPSYLWQLWDLIQSNTQEKIQPNPPSSGFIGILTMMALCDKLHVYEYIPSMRQTDLCHYHENYYDAACTLGAYHPLIYEKNLIRRINLGSEKDLLKKGRVTLPGFSTLTCGA</sequence>
<comment type="function">
    <text evidence="1">Transfers sialic acid from the donor of substrate CMP-sialic acid to galactose containing acceptor substrates.</text>
</comment>
<comment type="catalytic activity">
    <reaction evidence="2">
        <text>a beta-D-galactoside + CMP-N-acetyl-beta-neuraminate = an N-acetyl-alpha-neuraminyl-(2-&gt;6)-beta-D-galactosyl derivative + CMP + H(+)</text>
        <dbReference type="Rhea" id="RHEA:52104"/>
        <dbReference type="ChEBI" id="CHEBI:15378"/>
        <dbReference type="ChEBI" id="CHEBI:28034"/>
        <dbReference type="ChEBI" id="CHEBI:57812"/>
        <dbReference type="ChEBI" id="CHEBI:60377"/>
        <dbReference type="ChEBI" id="CHEBI:136398"/>
        <dbReference type="EC" id="2.4.3.1"/>
    </reaction>
</comment>
<comment type="subcellular location">
    <subcellularLocation>
        <location evidence="1">Golgi apparatus</location>
        <location evidence="1">Golgi stack membrane</location>
        <topology evidence="1">Single-pass type II membrane protein</topology>
    </subcellularLocation>
</comment>
<comment type="similarity">
    <text evidence="5">Belongs to the glycosyltransferase 29 family.</text>
</comment>
<keyword id="KW-1015">Disulfide bond</keyword>
<keyword id="KW-0325">Glycoprotein</keyword>
<keyword id="KW-0328">Glycosyltransferase</keyword>
<keyword id="KW-0333">Golgi apparatus</keyword>
<keyword id="KW-0472">Membrane</keyword>
<keyword id="KW-1185">Reference proteome</keyword>
<keyword id="KW-0735">Signal-anchor</keyword>
<keyword id="KW-0808">Transferase</keyword>
<keyword id="KW-0812">Transmembrane</keyword>
<keyword id="KW-1133">Transmembrane helix</keyword>
<dbReference type="EC" id="2.4.3.1" evidence="2"/>
<dbReference type="EMBL" id="AJ871601">
    <property type="protein sequence ID" value="CAI39644.1"/>
    <property type="molecule type" value="mRNA"/>
</dbReference>
<dbReference type="RefSeq" id="NP_001098242.1">
    <property type="nucleotide sequence ID" value="NM_001104772.1"/>
</dbReference>
<dbReference type="RefSeq" id="XP_011487504.1">
    <property type="nucleotide sequence ID" value="XM_011489202.3"/>
</dbReference>
<dbReference type="RefSeq" id="XP_020568472.1">
    <property type="nucleotide sequence ID" value="XM_020712813.2"/>
</dbReference>
<dbReference type="SMR" id="Q5K027"/>
<dbReference type="FunCoup" id="Q5K027">
    <property type="interactions" value="291"/>
</dbReference>
<dbReference type="STRING" id="8090.ENSORLP00000015721"/>
<dbReference type="CAZy" id="GT29">
    <property type="family name" value="Glycosyltransferase Family 29"/>
</dbReference>
<dbReference type="GlyCosmos" id="Q5K027">
    <property type="glycosylation" value="2 sites, No reported glycans"/>
</dbReference>
<dbReference type="Ensembl" id="ENSORLT00000015722.2">
    <property type="protein sequence ID" value="ENSORLP00000015721.2"/>
    <property type="gene ID" value="ENSORLG00000012556.2"/>
</dbReference>
<dbReference type="GeneID" id="100049381"/>
<dbReference type="KEGG" id="ola:100049381"/>
<dbReference type="CTD" id="403116"/>
<dbReference type="eggNOG" id="KOG2692">
    <property type="taxonomic scope" value="Eukaryota"/>
</dbReference>
<dbReference type="GeneTree" id="ENSGT00940000158714"/>
<dbReference type="InParanoid" id="Q5K027"/>
<dbReference type="OrthoDB" id="10264956at2759"/>
<dbReference type="BRENDA" id="2.4.99.1">
    <property type="organism ID" value="3199"/>
</dbReference>
<dbReference type="Proteomes" id="UP000001038">
    <property type="component" value="Chromosome 21"/>
</dbReference>
<dbReference type="Proteomes" id="UP000265180">
    <property type="component" value="Unplaced"/>
</dbReference>
<dbReference type="Proteomes" id="UP000265200">
    <property type="component" value="Unplaced"/>
</dbReference>
<dbReference type="Bgee" id="ENSORLG00000012556">
    <property type="expression patterns" value="Expressed in mesonephros and 14 other cell types or tissues"/>
</dbReference>
<dbReference type="GO" id="GO:0005794">
    <property type="term" value="C:Golgi apparatus"/>
    <property type="evidence" value="ECO:0000318"/>
    <property type="project" value="GO_Central"/>
</dbReference>
<dbReference type="GO" id="GO:0032580">
    <property type="term" value="C:Golgi cisterna membrane"/>
    <property type="evidence" value="ECO:0007669"/>
    <property type="project" value="UniProtKB-SubCell"/>
</dbReference>
<dbReference type="GO" id="GO:0003835">
    <property type="term" value="F:beta-galactoside alpha-2,6-sialyltransferase activity"/>
    <property type="evidence" value="ECO:0000318"/>
    <property type="project" value="GO_Central"/>
</dbReference>
<dbReference type="GO" id="GO:0006486">
    <property type="term" value="P:protein glycosylation"/>
    <property type="evidence" value="ECO:0007669"/>
    <property type="project" value="InterPro"/>
</dbReference>
<dbReference type="GO" id="GO:0097503">
    <property type="term" value="P:sialylation"/>
    <property type="evidence" value="ECO:0000318"/>
    <property type="project" value="GO_Central"/>
</dbReference>
<dbReference type="FunFam" id="3.90.1480.20:FF:000010">
    <property type="entry name" value="ST6 beta-galactoside alpha-2,6-sialyltransferase 2"/>
    <property type="match status" value="1"/>
</dbReference>
<dbReference type="Gene3D" id="3.90.1480.20">
    <property type="entry name" value="Glycosyl transferase family 29"/>
    <property type="match status" value="1"/>
</dbReference>
<dbReference type="InterPro" id="IPR001675">
    <property type="entry name" value="Glyco_trans_29"/>
</dbReference>
<dbReference type="InterPro" id="IPR038578">
    <property type="entry name" value="GT29-like_sf"/>
</dbReference>
<dbReference type="PANTHER" id="PTHR46059">
    <property type="entry name" value="BETA-GALACTOSIDE ALPHA-2,6-SIALYLTRANSFERASE"/>
    <property type="match status" value="1"/>
</dbReference>
<dbReference type="PANTHER" id="PTHR46059:SF3">
    <property type="entry name" value="BETA-GALACTOSIDE ALPHA-2,6-SIALYLTRANSFERASE 2"/>
    <property type="match status" value="1"/>
</dbReference>
<dbReference type="Pfam" id="PF00777">
    <property type="entry name" value="Glyco_transf_29"/>
    <property type="match status" value="1"/>
</dbReference>
<proteinExistence type="evidence at transcript level"/>
<reference key="1">
    <citation type="journal article" date="2005" name="Glycobiology">
        <title>The animal sialyltransferases and sialyltransferase-related genes: a phylogenetic approach.</title>
        <authorList>
            <person name="Harduin-Lepers A."/>
            <person name="Mollicone R."/>
            <person name="Delannoy P."/>
            <person name="Oriol R."/>
        </authorList>
    </citation>
    <scope>NUCLEOTIDE SEQUENCE [MRNA]</scope>
</reference>
<feature type="chain" id="PRO_0000314792" description="Beta-galactoside alpha-2,6-sialyltransferase 2">
    <location>
        <begin position="1"/>
        <end position="509"/>
    </location>
</feature>
<feature type="topological domain" description="Cytoplasmic" evidence="3">
    <location>
        <begin position="1"/>
        <end position="10"/>
    </location>
</feature>
<feature type="transmembrane region" description="Helical; Signal-anchor for type II membrane protein" evidence="3">
    <location>
        <begin position="11"/>
        <end position="31"/>
    </location>
</feature>
<feature type="topological domain" description="Lumenal" evidence="3">
    <location>
        <begin position="32"/>
        <end position="509"/>
    </location>
</feature>
<feature type="region of interest" description="Disordered" evidence="4">
    <location>
        <begin position="42"/>
        <end position="123"/>
    </location>
</feature>
<feature type="compositionally biased region" description="Polar residues" evidence="4">
    <location>
        <begin position="75"/>
        <end position="86"/>
    </location>
</feature>
<feature type="compositionally biased region" description="Polar residues" evidence="4">
    <location>
        <begin position="93"/>
        <end position="123"/>
    </location>
</feature>
<feature type="glycosylation site" description="N-linked (GlcNAc...) asparagine" evidence="3">
    <location>
        <position position="241"/>
    </location>
</feature>
<feature type="glycosylation site" description="N-linked (GlcNAc...) asparagine" evidence="3">
    <location>
        <position position="352"/>
    </location>
</feature>
<feature type="disulfide bond" evidence="1">
    <location>
        <begin position="237"/>
        <end position="507"/>
    </location>
</feature>
<feature type="disulfide bond" evidence="1">
    <location>
        <begin position="284"/>
        <end position="436"/>
    </location>
</feature>
<feature type="disulfide bond" evidence="1">
    <location>
        <begin position="454"/>
        <end position="465"/>
    </location>
</feature>
<evidence type="ECO:0000250" key="1"/>
<evidence type="ECO:0000250" key="2">
    <source>
        <dbReference type="UniProtKB" id="Q96JF0"/>
    </source>
</evidence>
<evidence type="ECO:0000255" key="3"/>
<evidence type="ECO:0000256" key="4">
    <source>
        <dbReference type="SAM" id="MobiDB-lite"/>
    </source>
</evidence>
<evidence type="ECO:0000305" key="5"/>
<organism>
    <name type="scientific">Oryzias latipes</name>
    <name type="common">Japanese rice fish</name>
    <name type="synonym">Japanese killifish</name>
    <dbReference type="NCBI Taxonomy" id="8090"/>
    <lineage>
        <taxon>Eukaryota</taxon>
        <taxon>Metazoa</taxon>
        <taxon>Chordata</taxon>
        <taxon>Craniata</taxon>
        <taxon>Vertebrata</taxon>
        <taxon>Euteleostomi</taxon>
        <taxon>Actinopterygii</taxon>
        <taxon>Neopterygii</taxon>
        <taxon>Teleostei</taxon>
        <taxon>Neoteleostei</taxon>
        <taxon>Acanthomorphata</taxon>
        <taxon>Ovalentaria</taxon>
        <taxon>Atherinomorphae</taxon>
        <taxon>Beloniformes</taxon>
        <taxon>Adrianichthyidae</taxon>
        <taxon>Oryziinae</taxon>
        <taxon>Oryzias</taxon>
    </lineage>
</organism>